<organism>
    <name type="scientific">Monodelphis domestica</name>
    <name type="common">Gray short-tailed opossum</name>
    <dbReference type="NCBI Taxonomy" id="13616"/>
    <lineage>
        <taxon>Eukaryota</taxon>
        <taxon>Metazoa</taxon>
        <taxon>Chordata</taxon>
        <taxon>Craniata</taxon>
        <taxon>Vertebrata</taxon>
        <taxon>Euteleostomi</taxon>
        <taxon>Mammalia</taxon>
        <taxon>Metatheria</taxon>
        <taxon>Didelphimorphia</taxon>
        <taxon>Didelphidae</taxon>
        <taxon>Monodelphis</taxon>
    </lineage>
</organism>
<reference key="1">
    <citation type="journal article" date="2003" name="J. Mol. Evol.">
        <title>Radiation of extant marsupials after the K/T boundary: evidence from complete mitochondrial genomes.</title>
        <authorList>
            <person name="Nilsson M.A."/>
            <person name="Gullberg A."/>
            <person name="Spotorno A.E."/>
            <person name="Arnason U."/>
            <person name="Janke A."/>
        </authorList>
    </citation>
    <scope>NUCLEOTIDE SEQUENCE [LARGE SCALE GENOMIC DNA]</scope>
</reference>
<feature type="chain" id="PRO_0000275066" description="NADH-ubiquinone oxidoreductase chain 4L">
    <location>
        <begin position="1"/>
        <end position="98"/>
    </location>
</feature>
<feature type="transmembrane region" description="Helical" evidence="3">
    <location>
        <begin position="1"/>
        <end position="21"/>
    </location>
</feature>
<feature type="transmembrane region" description="Helical" evidence="3">
    <location>
        <begin position="28"/>
        <end position="48"/>
    </location>
</feature>
<feature type="transmembrane region" description="Helical" evidence="3">
    <location>
        <begin position="61"/>
        <end position="81"/>
    </location>
</feature>
<sequence length="98" mass="10794">MEQINLNMITAFTIALMGVLTYRSHLMSTLLCLEGMMLSLFILMVLLISHSHMVSMSMAPLILLVFSACEAGVGLALLVTISHTYGNDYVQNLNLLQC</sequence>
<proteinExistence type="inferred from homology"/>
<geneLocation type="mitochondrion"/>
<name>NU4LM_MONDO</name>
<accession>Q65CI5</accession>
<gene>
    <name type="primary">MT-ND4L</name>
    <name type="synonym">MTND4L</name>
    <name type="synonym">NADH4L</name>
    <name type="synonym">ND4L</name>
</gene>
<dbReference type="EC" id="7.1.1.2"/>
<dbReference type="EMBL" id="AJ508398">
    <property type="protein sequence ID" value="CAD48208.1"/>
    <property type="molecule type" value="Genomic_DNA"/>
</dbReference>
<dbReference type="RefSeq" id="YP_087187.1">
    <property type="nucleotide sequence ID" value="NC_006299.1"/>
</dbReference>
<dbReference type="SMR" id="Q65CI5"/>
<dbReference type="FunCoup" id="Q65CI5">
    <property type="interactions" value="86"/>
</dbReference>
<dbReference type="STRING" id="13616.ENSMODP00000026939"/>
<dbReference type="Ensembl" id="ENSMODT00000027438.1">
    <property type="protein sequence ID" value="ENSMODP00000026939.1"/>
    <property type="gene ID" value="ENSMODG00000021583.1"/>
</dbReference>
<dbReference type="GeneID" id="3074657"/>
<dbReference type="KEGG" id="mdo:3074657"/>
<dbReference type="CTD" id="4539"/>
<dbReference type="eggNOG" id="KOG4669">
    <property type="taxonomic scope" value="Eukaryota"/>
</dbReference>
<dbReference type="GeneTree" id="ENSGT00390000004755"/>
<dbReference type="HOGENOM" id="CLU_182394_0_0_1"/>
<dbReference type="InParanoid" id="Q65CI5"/>
<dbReference type="OMA" id="MYRSHLM"/>
<dbReference type="TreeFam" id="TF338190"/>
<dbReference type="Proteomes" id="UP000002280">
    <property type="component" value="Mitochondrion"/>
</dbReference>
<dbReference type="Bgee" id="ENSMODG00000021583">
    <property type="expression patterns" value="Expressed in skeletal muscle tissue and 21 other cell types or tissues"/>
</dbReference>
<dbReference type="GO" id="GO:0005743">
    <property type="term" value="C:mitochondrial inner membrane"/>
    <property type="evidence" value="ECO:0000250"/>
    <property type="project" value="UniProtKB"/>
</dbReference>
<dbReference type="GO" id="GO:0045271">
    <property type="term" value="C:respiratory chain complex I"/>
    <property type="evidence" value="ECO:0000250"/>
    <property type="project" value="UniProtKB"/>
</dbReference>
<dbReference type="GO" id="GO:0008137">
    <property type="term" value="F:NADH dehydrogenase (ubiquinone) activity"/>
    <property type="evidence" value="ECO:0000250"/>
    <property type="project" value="UniProtKB"/>
</dbReference>
<dbReference type="GO" id="GO:0042773">
    <property type="term" value="P:ATP synthesis coupled electron transport"/>
    <property type="evidence" value="ECO:0007669"/>
    <property type="project" value="InterPro"/>
</dbReference>
<dbReference type="FunFam" id="1.10.287.3510:FF:000002">
    <property type="entry name" value="NADH-ubiquinone oxidoreductase chain 4L"/>
    <property type="match status" value="1"/>
</dbReference>
<dbReference type="Gene3D" id="1.10.287.3510">
    <property type="match status" value="1"/>
</dbReference>
<dbReference type="InterPro" id="IPR001133">
    <property type="entry name" value="NADH_UbQ_OxRdtase_chain4L/K"/>
</dbReference>
<dbReference type="InterPro" id="IPR039428">
    <property type="entry name" value="NUOK/Mnh_C1-like"/>
</dbReference>
<dbReference type="PANTHER" id="PTHR11434:SF0">
    <property type="entry name" value="NADH-UBIQUINONE OXIDOREDUCTASE CHAIN 4L"/>
    <property type="match status" value="1"/>
</dbReference>
<dbReference type="PANTHER" id="PTHR11434">
    <property type="entry name" value="NADH-UBIQUINONE OXIDOREDUCTASE SUBUNIT ND4L"/>
    <property type="match status" value="1"/>
</dbReference>
<dbReference type="Pfam" id="PF00420">
    <property type="entry name" value="Oxidored_q2"/>
    <property type="match status" value="1"/>
</dbReference>
<keyword id="KW-0249">Electron transport</keyword>
<keyword id="KW-0472">Membrane</keyword>
<keyword id="KW-0496">Mitochondrion</keyword>
<keyword id="KW-0999">Mitochondrion inner membrane</keyword>
<keyword id="KW-0520">NAD</keyword>
<keyword id="KW-1185">Reference proteome</keyword>
<keyword id="KW-0679">Respiratory chain</keyword>
<keyword id="KW-1278">Translocase</keyword>
<keyword id="KW-0812">Transmembrane</keyword>
<keyword id="KW-1133">Transmembrane helix</keyword>
<keyword id="KW-0813">Transport</keyword>
<keyword id="KW-0830">Ubiquinone</keyword>
<comment type="function">
    <text evidence="1">Core subunit of the mitochondrial membrane respiratory chain NADH dehydrogenase (Complex I) which catalyzes electron transfer from NADH through the respiratory chain, using ubiquinone as an electron acceptor. Part of the enzyme membrane arm which is embedded in the lipid bilayer and involved in proton translocation.</text>
</comment>
<comment type="catalytic activity">
    <reaction evidence="1">
        <text>a ubiquinone + NADH + 5 H(+)(in) = a ubiquinol + NAD(+) + 4 H(+)(out)</text>
        <dbReference type="Rhea" id="RHEA:29091"/>
        <dbReference type="Rhea" id="RHEA-COMP:9565"/>
        <dbReference type="Rhea" id="RHEA-COMP:9566"/>
        <dbReference type="ChEBI" id="CHEBI:15378"/>
        <dbReference type="ChEBI" id="CHEBI:16389"/>
        <dbReference type="ChEBI" id="CHEBI:17976"/>
        <dbReference type="ChEBI" id="CHEBI:57540"/>
        <dbReference type="ChEBI" id="CHEBI:57945"/>
        <dbReference type="EC" id="7.1.1.2"/>
    </reaction>
    <physiologicalReaction direction="left-to-right" evidence="1">
        <dbReference type="Rhea" id="RHEA:29092"/>
    </physiologicalReaction>
</comment>
<comment type="subunit">
    <text evidence="2">Core subunit of respiratory chain NADH dehydrogenase (Complex I) which is composed of 45 different subunits.</text>
</comment>
<comment type="subcellular location">
    <subcellularLocation>
        <location evidence="2">Mitochondrion inner membrane</location>
        <topology evidence="3">Multi-pass membrane protein</topology>
    </subcellularLocation>
</comment>
<comment type="similarity">
    <text evidence="4">Belongs to the complex I subunit 4L family.</text>
</comment>
<evidence type="ECO:0000250" key="1">
    <source>
        <dbReference type="UniProtKB" id="P03901"/>
    </source>
</evidence>
<evidence type="ECO:0000250" key="2">
    <source>
        <dbReference type="UniProtKB" id="P03902"/>
    </source>
</evidence>
<evidence type="ECO:0000255" key="3"/>
<evidence type="ECO:0000305" key="4"/>
<protein>
    <recommendedName>
        <fullName>NADH-ubiquinone oxidoreductase chain 4L</fullName>
        <ecNumber>7.1.1.2</ecNumber>
    </recommendedName>
    <alternativeName>
        <fullName>NADH dehydrogenase subunit 4L</fullName>
    </alternativeName>
</protein>